<dbReference type="EC" id="2.1.1.222" evidence="1"/>
<dbReference type="EC" id="2.1.1.64" evidence="1"/>
<dbReference type="EMBL" id="AE016795">
    <property type="protein sequence ID" value="AAO11364.1"/>
    <property type="molecule type" value="Genomic_DNA"/>
</dbReference>
<dbReference type="RefSeq" id="WP_011080845.1">
    <property type="nucleotide sequence ID" value="NC_004459.3"/>
</dbReference>
<dbReference type="SMR" id="Q8D8E0"/>
<dbReference type="KEGG" id="vvu:VV1_3040"/>
<dbReference type="HOGENOM" id="CLU_042432_5_0_6"/>
<dbReference type="UniPathway" id="UPA00232"/>
<dbReference type="Proteomes" id="UP000002275">
    <property type="component" value="Chromosome 1"/>
</dbReference>
<dbReference type="GO" id="GO:0102208">
    <property type="term" value="F:2-polyprenyl-6-hydroxyphenol methylase activity"/>
    <property type="evidence" value="ECO:0007669"/>
    <property type="project" value="UniProtKB-EC"/>
</dbReference>
<dbReference type="GO" id="GO:0061542">
    <property type="term" value="F:3-demethylubiquinol 3-O-methyltransferase activity"/>
    <property type="evidence" value="ECO:0007669"/>
    <property type="project" value="UniProtKB-UniRule"/>
</dbReference>
<dbReference type="GO" id="GO:0010420">
    <property type="term" value="F:polyprenyldihydroxybenzoate methyltransferase activity"/>
    <property type="evidence" value="ECO:0007669"/>
    <property type="project" value="InterPro"/>
</dbReference>
<dbReference type="GO" id="GO:0032259">
    <property type="term" value="P:methylation"/>
    <property type="evidence" value="ECO:0007669"/>
    <property type="project" value="UniProtKB-KW"/>
</dbReference>
<dbReference type="CDD" id="cd02440">
    <property type="entry name" value="AdoMet_MTases"/>
    <property type="match status" value="1"/>
</dbReference>
<dbReference type="FunFam" id="3.40.50.150:FF:000028">
    <property type="entry name" value="Ubiquinone biosynthesis O-methyltransferase"/>
    <property type="match status" value="1"/>
</dbReference>
<dbReference type="Gene3D" id="3.40.50.150">
    <property type="entry name" value="Vaccinia Virus protein VP39"/>
    <property type="match status" value="1"/>
</dbReference>
<dbReference type="HAMAP" id="MF_00472">
    <property type="entry name" value="UbiG"/>
    <property type="match status" value="1"/>
</dbReference>
<dbReference type="InterPro" id="IPR029063">
    <property type="entry name" value="SAM-dependent_MTases_sf"/>
</dbReference>
<dbReference type="InterPro" id="IPR010233">
    <property type="entry name" value="UbiG_MeTrfase"/>
</dbReference>
<dbReference type="NCBIfam" id="TIGR01983">
    <property type="entry name" value="UbiG"/>
    <property type="match status" value="1"/>
</dbReference>
<dbReference type="PANTHER" id="PTHR43464">
    <property type="entry name" value="METHYLTRANSFERASE"/>
    <property type="match status" value="1"/>
</dbReference>
<dbReference type="PANTHER" id="PTHR43464:SF19">
    <property type="entry name" value="UBIQUINONE BIOSYNTHESIS O-METHYLTRANSFERASE, MITOCHONDRIAL"/>
    <property type="match status" value="1"/>
</dbReference>
<dbReference type="Pfam" id="PF13489">
    <property type="entry name" value="Methyltransf_23"/>
    <property type="match status" value="1"/>
</dbReference>
<dbReference type="SUPFAM" id="SSF53335">
    <property type="entry name" value="S-adenosyl-L-methionine-dependent methyltransferases"/>
    <property type="match status" value="1"/>
</dbReference>
<name>UBIG_VIBVU</name>
<sequence>MTKTQNVDPNEIKKFEDMASRWWDLEGEFKPLHQINPLRLDYVLSKADGLFGKKVLDVGCGGGILAESMAKEGAVVTGLDMGKEPLEVARLHALETGTKLTYIQSTIEDHAAENAQMYDVVTCMEMLEHVPDPLSVIRSCAALVKPGGHVFFSTLNRNIKSYLFAIVGAEKLLKIVPEGTHDHDKFIRPSELIKMIDQTDLCEQGITGLHYNPLSDTYKLGRNVDVNYIVHTQKF</sequence>
<comment type="function">
    <text evidence="1">O-methyltransferase that catalyzes the 2 O-methylation steps in the ubiquinone biosynthetic pathway.</text>
</comment>
<comment type="catalytic activity">
    <reaction evidence="1">
        <text>a 3-demethylubiquinol + S-adenosyl-L-methionine = a ubiquinol + S-adenosyl-L-homocysteine + H(+)</text>
        <dbReference type="Rhea" id="RHEA:44380"/>
        <dbReference type="Rhea" id="RHEA-COMP:9566"/>
        <dbReference type="Rhea" id="RHEA-COMP:10914"/>
        <dbReference type="ChEBI" id="CHEBI:15378"/>
        <dbReference type="ChEBI" id="CHEBI:17976"/>
        <dbReference type="ChEBI" id="CHEBI:57856"/>
        <dbReference type="ChEBI" id="CHEBI:59789"/>
        <dbReference type="ChEBI" id="CHEBI:84422"/>
        <dbReference type="EC" id="2.1.1.64"/>
    </reaction>
</comment>
<comment type="catalytic activity">
    <reaction evidence="1">
        <text>a 3-(all-trans-polyprenyl)benzene-1,2-diol + S-adenosyl-L-methionine = a 2-methoxy-6-(all-trans-polyprenyl)phenol + S-adenosyl-L-homocysteine + H(+)</text>
        <dbReference type="Rhea" id="RHEA:31411"/>
        <dbReference type="Rhea" id="RHEA-COMP:9550"/>
        <dbReference type="Rhea" id="RHEA-COMP:9551"/>
        <dbReference type="ChEBI" id="CHEBI:15378"/>
        <dbReference type="ChEBI" id="CHEBI:57856"/>
        <dbReference type="ChEBI" id="CHEBI:59789"/>
        <dbReference type="ChEBI" id="CHEBI:62729"/>
        <dbReference type="ChEBI" id="CHEBI:62731"/>
        <dbReference type="EC" id="2.1.1.222"/>
    </reaction>
</comment>
<comment type="pathway">
    <text evidence="1">Cofactor biosynthesis; ubiquinone biosynthesis.</text>
</comment>
<comment type="similarity">
    <text evidence="1">Belongs to the methyltransferase superfamily. UbiG/COQ3 family.</text>
</comment>
<proteinExistence type="inferred from homology"/>
<protein>
    <recommendedName>
        <fullName evidence="1">Ubiquinone biosynthesis O-methyltransferase</fullName>
    </recommendedName>
    <alternativeName>
        <fullName evidence="1">2-polyprenyl-6-hydroxyphenol methylase</fullName>
        <ecNumber evidence="1">2.1.1.222</ecNumber>
    </alternativeName>
    <alternativeName>
        <fullName evidence="1">3-demethylubiquinone 3-O-methyltransferase</fullName>
        <ecNumber evidence="1">2.1.1.64</ecNumber>
    </alternativeName>
</protein>
<keyword id="KW-0489">Methyltransferase</keyword>
<keyword id="KW-0949">S-adenosyl-L-methionine</keyword>
<keyword id="KW-0808">Transferase</keyword>
<keyword id="KW-0831">Ubiquinone biosynthesis</keyword>
<organism>
    <name type="scientific">Vibrio vulnificus (strain CMCP6)</name>
    <dbReference type="NCBI Taxonomy" id="216895"/>
    <lineage>
        <taxon>Bacteria</taxon>
        <taxon>Pseudomonadati</taxon>
        <taxon>Pseudomonadota</taxon>
        <taxon>Gammaproteobacteria</taxon>
        <taxon>Vibrionales</taxon>
        <taxon>Vibrionaceae</taxon>
        <taxon>Vibrio</taxon>
    </lineage>
</organism>
<accession>Q8D8E0</accession>
<reference key="1">
    <citation type="submission" date="2002-12" db="EMBL/GenBank/DDBJ databases">
        <title>Complete genome sequence of Vibrio vulnificus CMCP6.</title>
        <authorList>
            <person name="Rhee J.H."/>
            <person name="Kim S.Y."/>
            <person name="Chung S.S."/>
            <person name="Kim J.J."/>
            <person name="Moon Y.H."/>
            <person name="Jeong H."/>
            <person name="Choy H.E."/>
        </authorList>
    </citation>
    <scope>NUCLEOTIDE SEQUENCE [LARGE SCALE GENOMIC DNA]</scope>
    <source>
        <strain>CMCP6</strain>
    </source>
</reference>
<gene>
    <name evidence="1" type="primary">ubiG</name>
    <name type="ordered locus">VV1_3040</name>
</gene>
<evidence type="ECO:0000255" key="1">
    <source>
        <dbReference type="HAMAP-Rule" id="MF_00472"/>
    </source>
</evidence>
<feature type="chain" id="PRO_0000193407" description="Ubiquinone biosynthesis O-methyltransferase">
    <location>
        <begin position="1"/>
        <end position="235"/>
    </location>
</feature>
<feature type="binding site" evidence="1">
    <location>
        <position position="39"/>
    </location>
    <ligand>
        <name>S-adenosyl-L-methionine</name>
        <dbReference type="ChEBI" id="CHEBI:59789"/>
    </ligand>
</feature>
<feature type="binding site" evidence="1">
    <location>
        <position position="59"/>
    </location>
    <ligand>
        <name>S-adenosyl-L-methionine</name>
        <dbReference type="ChEBI" id="CHEBI:59789"/>
    </ligand>
</feature>
<feature type="binding site" evidence="1">
    <location>
        <position position="80"/>
    </location>
    <ligand>
        <name>S-adenosyl-L-methionine</name>
        <dbReference type="ChEBI" id="CHEBI:59789"/>
    </ligand>
</feature>
<feature type="binding site" evidence="1">
    <location>
        <position position="124"/>
    </location>
    <ligand>
        <name>S-adenosyl-L-methionine</name>
        <dbReference type="ChEBI" id="CHEBI:59789"/>
    </ligand>
</feature>